<sequence>MAPKKKSNDRAIQAKGSEAEQLIEDYLVSQYKPFSVNDIVQNLHNKVTKTTATKALENLVNEKRIVSKTFGKIIIYSCNEQDTALPSNIDPSQFDFETVLQLRNDLIELERDKSTAKDALDSVTKEPENEDLLTIIENEENELKKIESKLQSLQDDWDPANDEIVKRIMSEDTLLQKEITKRSKICKNLIATIKDSVCPKNMNEFLEEIGFEDI</sequence>
<accession>P53187</accession>
<accession>D6VUA5</accession>
<accession>O74245</accession>
<comment type="function">
    <text evidence="2 3 4 5">Required for proper homologous chromosome pairing and efficient cross-over and intragenic recombination during meiosis. Stimulates DMC1-dependent homologous strand assimilation required for the resolution of meiotic double-strand breaks.</text>
</comment>
<comment type="subunit">
    <text>Heterodimer with MND1. MND1-HOP2 binds preferentially to dsDNA.</text>
</comment>
<comment type="subcellular location">
    <subcellularLocation>
        <location evidence="5">Nucleus</location>
    </subcellularLocation>
</comment>
<comment type="similarity">
    <text evidence="6">Belongs to the HOP2 family.</text>
</comment>
<comment type="sequence caution" evidence="6">
    <conflict type="erroneous gene model prediction">
        <sequence resource="EMBL-CDS" id="AAC31823"/>
    </conflict>
</comment>
<comment type="sequence caution" evidence="6">
    <conflict type="frameshift">
        <sequence resource="EMBL-CDS" id="AAC31823"/>
    </conflict>
</comment>
<comment type="sequence caution" evidence="6">
    <conflict type="erroneous gene model prediction">
        <sequence resource="EMBL-CDS" id="CAA96734"/>
    </conflict>
</comment>
<gene>
    <name type="primary">HOP2</name>
    <name type="ordered locus">YGL033W</name>
</gene>
<protein>
    <recommendedName>
        <fullName>Homologous-pairing protein 2</fullName>
    </recommendedName>
</protein>
<organism>
    <name type="scientific">Saccharomyces cerevisiae (strain ATCC 204508 / S288c)</name>
    <name type="common">Baker's yeast</name>
    <dbReference type="NCBI Taxonomy" id="559292"/>
    <lineage>
        <taxon>Eukaryota</taxon>
        <taxon>Fungi</taxon>
        <taxon>Dikarya</taxon>
        <taxon>Ascomycota</taxon>
        <taxon>Saccharomycotina</taxon>
        <taxon>Saccharomycetes</taxon>
        <taxon>Saccharomycetales</taxon>
        <taxon>Saccharomycetaceae</taxon>
        <taxon>Saccharomyces</taxon>
    </lineage>
</organism>
<proteinExistence type="evidence at protein level"/>
<dbReference type="EMBL" id="Z72555">
    <property type="protein sequence ID" value="CAA96734.1"/>
    <property type="status" value="ALT_SEQ"/>
    <property type="molecule type" value="Genomic_DNA"/>
</dbReference>
<dbReference type="EMBL" id="AF078740">
    <property type="protein sequence ID" value="AAC31823.1"/>
    <property type="status" value="ALT_SEQ"/>
    <property type="molecule type" value="Genomic_DNA"/>
</dbReference>
<dbReference type="EMBL" id="BK006941">
    <property type="protein sequence ID" value="DAA08066.2"/>
    <property type="molecule type" value="Genomic_DNA"/>
</dbReference>
<dbReference type="PIR" id="S64035">
    <property type="entry name" value="S64035"/>
</dbReference>
<dbReference type="RefSeq" id="NP_011482.3">
    <property type="nucleotide sequence ID" value="NM_001180898.2"/>
</dbReference>
<dbReference type="SMR" id="P53187"/>
<dbReference type="BioGRID" id="33213">
    <property type="interactions" value="56"/>
</dbReference>
<dbReference type="ComplexPortal" id="CPX-1644">
    <property type="entry name" value="HOP2-MND1 recombination assembly factor complex"/>
</dbReference>
<dbReference type="FunCoup" id="P53187">
    <property type="interactions" value="309"/>
</dbReference>
<dbReference type="IntAct" id="P53187">
    <property type="interactions" value="1"/>
</dbReference>
<dbReference type="STRING" id="4932.YGL033W"/>
<dbReference type="CarbonylDB" id="P53187"/>
<dbReference type="iPTMnet" id="P53187"/>
<dbReference type="PaxDb" id="4932-YGL033W"/>
<dbReference type="PeptideAtlas" id="P53187"/>
<dbReference type="EnsemblFungi" id="YGL033W_mRNA">
    <property type="protein sequence ID" value="YGL033W"/>
    <property type="gene ID" value="YGL033W"/>
</dbReference>
<dbReference type="GeneID" id="852850"/>
<dbReference type="KEGG" id="sce:YGL033W"/>
<dbReference type="AGR" id="SGD:S000003001"/>
<dbReference type="SGD" id="S000003001">
    <property type="gene designation" value="HOP2"/>
</dbReference>
<dbReference type="VEuPathDB" id="FungiDB:YGL033W"/>
<dbReference type="eggNOG" id="KOG4603">
    <property type="taxonomic scope" value="Eukaryota"/>
</dbReference>
<dbReference type="HOGENOM" id="CLU_063266_2_0_1"/>
<dbReference type="InParanoid" id="P53187"/>
<dbReference type="OMA" id="RIICKLF"/>
<dbReference type="OrthoDB" id="272266at2759"/>
<dbReference type="BioCyc" id="YEAST:G3O-30549-MONOMER"/>
<dbReference type="BioGRID-ORCS" id="852850">
    <property type="hits" value="0 hits in 10 CRISPR screens"/>
</dbReference>
<dbReference type="PRO" id="PR:P53187"/>
<dbReference type="Proteomes" id="UP000002311">
    <property type="component" value="Chromosome VII"/>
</dbReference>
<dbReference type="RNAct" id="P53187">
    <property type="molecule type" value="protein"/>
</dbReference>
<dbReference type="GO" id="GO:0000794">
    <property type="term" value="C:condensed nuclear chromosome"/>
    <property type="evidence" value="ECO:0000314"/>
    <property type="project" value="SGD"/>
</dbReference>
<dbReference type="GO" id="GO:0120231">
    <property type="term" value="C:DNA recombinase auxiliary factor complex"/>
    <property type="evidence" value="ECO:0000318"/>
    <property type="project" value="GO_Central"/>
</dbReference>
<dbReference type="GO" id="GO:0003690">
    <property type="term" value="F:double-stranded DNA binding"/>
    <property type="evidence" value="ECO:0000314"/>
    <property type="project" value="SGD"/>
</dbReference>
<dbReference type="GO" id="GO:0120230">
    <property type="term" value="F:recombinase activator activity"/>
    <property type="evidence" value="ECO:0000318"/>
    <property type="project" value="GO_Central"/>
</dbReference>
<dbReference type="GO" id="GO:0007129">
    <property type="term" value="P:homologous chromosome pairing at meiosis"/>
    <property type="evidence" value="ECO:0000314"/>
    <property type="project" value="ComplexPortal"/>
</dbReference>
<dbReference type="GO" id="GO:0000709">
    <property type="term" value="P:meiotic joint molecule formation"/>
    <property type="evidence" value="ECO:0000318"/>
    <property type="project" value="GO_Central"/>
</dbReference>
<dbReference type="GO" id="GO:0010774">
    <property type="term" value="P:meiotic strand invasion involved in reciprocal meiotic recombination"/>
    <property type="evidence" value="ECO:0000318"/>
    <property type="project" value="GO_Central"/>
</dbReference>
<dbReference type="GO" id="GO:0007131">
    <property type="term" value="P:reciprocal meiotic recombination"/>
    <property type="evidence" value="ECO:0000314"/>
    <property type="project" value="ComplexPortal"/>
</dbReference>
<dbReference type="FunFam" id="1.10.10.10:FF:000898">
    <property type="entry name" value="Homologous-pairing protein 2"/>
    <property type="match status" value="1"/>
</dbReference>
<dbReference type="Gene3D" id="1.10.10.10">
    <property type="entry name" value="Winged helix-like DNA-binding domain superfamily/Winged helix DNA-binding domain"/>
    <property type="match status" value="1"/>
</dbReference>
<dbReference type="InterPro" id="IPR010776">
    <property type="entry name" value="Hop2_WH_dom"/>
</dbReference>
<dbReference type="InterPro" id="IPR036388">
    <property type="entry name" value="WH-like_DNA-bd_sf"/>
</dbReference>
<dbReference type="PANTHER" id="PTHR15938:SF0">
    <property type="entry name" value="HOMOLOGOUS-PAIRING PROTEIN 2 HOMOLOG"/>
    <property type="match status" value="1"/>
</dbReference>
<dbReference type="PANTHER" id="PTHR15938">
    <property type="entry name" value="TBP-1 INTERACTING PROTEIN"/>
    <property type="match status" value="1"/>
</dbReference>
<dbReference type="Pfam" id="PF07106">
    <property type="entry name" value="TBPIP"/>
    <property type="match status" value="1"/>
</dbReference>
<name>HOP2_YEAST</name>
<feature type="chain" id="PRO_0000084027" description="Homologous-pairing protein 2">
    <location>
        <begin position="1"/>
        <end position="214"/>
    </location>
</feature>
<feature type="coiled-coil region" evidence="1">
    <location>
        <begin position="97"/>
        <end position="160"/>
    </location>
</feature>
<feature type="sequence conflict" description="In Ref. 3; AAC31823." evidence="6" ref="3">
    <original>G</original>
    <variation>A</variation>
    <location>
        <position position="71"/>
    </location>
</feature>
<evidence type="ECO:0000255" key="1"/>
<evidence type="ECO:0000269" key="2">
    <source>
    </source>
</evidence>
<evidence type="ECO:0000269" key="3">
    <source>
    </source>
</evidence>
<evidence type="ECO:0000269" key="4">
    <source>
    </source>
</evidence>
<evidence type="ECO:0000269" key="5">
    <source>
    </source>
</evidence>
<evidence type="ECO:0000305" key="6"/>
<keyword id="KW-0175">Coiled coil</keyword>
<keyword id="KW-0903">Direct protein sequencing</keyword>
<keyword id="KW-0233">DNA recombination</keyword>
<keyword id="KW-0238">DNA-binding</keyword>
<keyword id="KW-0469">Meiosis</keyword>
<keyword id="KW-0539">Nucleus</keyword>
<keyword id="KW-1185">Reference proteome</keyword>
<reference key="1">
    <citation type="journal article" date="1997" name="Nature">
        <title>The nucleotide sequence of Saccharomyces cerevisiae chromosome VII.</title>
        <authorList>
            <person name="Tettelin H."/>
            <person name="Agostoni-Carbone M.L."/>
            <person name="Albermann K."/>
            <person name="Albers M."/>
            <person name="Arroyo J."/>
            <person name="Backes U."/>
            <person name="Barreiros T."/>
            <person name="Bertani I."/>
            <person name="Bjourson A.J."/>
            <person name="Brueckner M."/>
            <person name="Bruschi C.V."/>
            <person name="Carignani G."/>
            <person name="Castagnoli L."/>
            <person name="Cerdan E."/>
            <person name="Clemente M.L."/>
            <person name="Coblenz A."/>
            <person name="Coglievina M."/>
            <person name="Coissac E."/>
            <person name="Defoor E."/>
            <person name="Del Bino S."/>
            <person name="Delius H."/>
            <person name="Delneri D."/>
            <person name="de Wergifosse P."/>
            <person name="Dujon B."/>
            <person name="Durand P."/>
            <person name="Entian K.-D."/>
            <person name="Eraso P."/>
            <person name="Escribano V."/>
            <person name="Fabiani L."/>
            <person name="Fartmann B."/>
            <person name="Feroli F."/>
            <person name="Feuermann M."/>
            <person name="Frontali L."/>
            <person name="Garcia-Gonzalez M."/>
            <person name="Garcia-Saez M.I."/>
            <person name="Goffeau A."/>
            <person name="Guerreiro P."/>
            <person name="Hani J."/>
            <person name="Hansen M."/>
            <person name="Hebling U."/>
            <person name="Hernandez K."/>
            <person name="Heumann K."/>
            <person name="Hilger F."/>
            <person name="Hofmann B."/>
            <person name="Indge K.J."/>
            <person name="James C.M."/>
            <person name="Klima R."/>
            <person name="Koetter P."/>
            <person name="Kramer B."/>
            <person name="Kramer W."/>
            <person name="Lauquin G."/>
            <person name="Leuther H."/>
            <person name="Louis E.J."/>
            <person name="Maillier E."/>
            <person name="Marconi A."/>
            <person name="Martegani E."/>
            <person name="Mazon M.J."/>
            <person name="Mazzoni C."/>
            <person name="McReynolds A.D.K."/>
            <person name="Melchioretto P."/>
            <person name="Mewes H.-W."/>
            <person name="Minenkova O."/>
            <person name="Mueller-Auer S."/>
            <person name="Nawrocki A."/>
            <person name="Netter P."/>
            <person name="Neu R."/>
            <person name="Nombela C."/>
            <person name="Oliver S.G."/>
            <person name="Panzeri L."/>
            <person name="Paoluzi S."/>
            <person name="Plevani P."/>
            <person name="Portetelle D."/>
            <person name="Portillo F."/>
            <person name="Potier S."/>
            <person name="Purnelle B."/>
            <person name="Rieger M."/>
            <person name="Riles L."/>
            <person name="Rinaldi T."/>
            <person name="Robben J."/>
            <person name="Rodrigues-Pousada C."/>
            <person name="Rodriguez-Belmonte E."/>
            <person name="Rodriguez-Torres A.M."/>
            <person name="Rose M."/>
            <person name="Ruzzi M."/>
            <person name="Saliola M."/>
            <person name="Sanchez-Perez M."/>
            <person name="Schaefer B."/>
            <person name="Schaefer M."/>
            <person name="Scharfe M."/>
            <person name="Schmidheini T."/>
            <person name="Schreer A."/>
            <person name="Skala J."/>
            <person name="Souciet J.-L."/>
            <person name="Steensma H.Y."/>
            <person name="Talla E."/>
            <person name="Thierry A."/>
            <person name="Vandenbol M."/>
            <person name="van der Aart Q.J.M."/>
            <person name="Van Dyck L."/>
            <person name="Vanoni M."/>
            <person name="Verhasselt P."/>
            <person name="Voet M."/>
            <person name="Volckaert G."/>
            <person name="Wambutt R."/>
            <person name="Watson M.D."/>
            <person name="Weber N."/>
            <person name="Wedler E."/>
            <person name="Wedler H."/>
            <person name="Wipfli P."/>
            <person name="Wolf K."/>
            <person name="Wright L.F."/>
            <person name="Zaccaria P."/>
            <person name="Zimmermann M."/>
            <person name="Zollner A."/>
            <person name="Kleine K."/>
        </authorList>
    </citation>
    <scope>NUCLEOTIDE SEQUENCE [LARGE SCALE GENOMIC DNA]</scope>
    <source>
        <strain>ATCC 204508 / S288c</strain>
    </source>
</reference>
<reference key="2">
    <citation type="journal article" date="2014" name="G3 (Bethesda)">
        <title>The reference genome sequence of Saccharomyces cerevisiae: Then and now.</title>
        <authorList>
            <person name="Engel S.R."/>
            <person name="Dietrich F.S."/>
            <person name="Fisk D.G."/>
            <person name="Binkley G."/>
            <person name="Balakrishnan R."/>
            <person name="Costanzo M.C."/>
            <person name="Dwight S.S."/>
            <person name="Hitz B.C."/>
            <person name="Karra K."/>
            <person name="Nash R.S."/>
            <person name="Weng S."/>
            <person name="Wong E.D."/>
            <person name="Lloyd P."/>
            <person name="Skrzypek M.S."/>
            <person name="Miyasato S.R."/>
            <person name="Simison M."/>
            <person name="Cherry J.M."/>
        </authorList>
    </citation>
    <scope>GENOME REANNOTATION</scope>
    <source>
        <strain>ATCC 204508 / S288c</strain>
    </source>
</reference>
<reference key="3">
    <citation type="journal article" date="1998" name="Cell">
        <title>The meiosis-specific Hop2 protein of S. cerevisiae ensures synapsis between homologous chromosomes.</title>
        <authorList>
            <person name="Leu J.-Y."/>
            <person name="Chua P.R."/>
            <person name="Roeder G.S."/>
        </authorList>
    </citation>
    <scope>NUCLEOTIDE SEQUENCE [GENOMIC DNA] OF 1-203</scope>
    <scope>FUNCTION</scope>
    <scope>SUBCELLULAR LOCATION</scope>
    <source>
        <strain>YAB36</strain>
    </source>
</reference>
<reference key="4">
    <citation type="journal article" date="2004" name="Proc. Natl. Acad. Sci. U.S.A.">
        <title>Heterodimeric complexes of Hop2 and Mnd1 function with Dmc1 to promote meiotic homolog juxtaposition and strand assimilation.</title>
        <authorList>
            <person name="Chen Y.-K."/>
            <person name="Leng C.-H."/>
            <person name="Olivares H."/>
            <person name="Lee M.-H."/>
            <person name="Chang Y.-C."/>
            <person name="Kung W.-M."/>
            <person name="Ti S.-C."/>
            <person name="Lo Y.-H."/>
            <person name="Wang A.H.-J."/>
            <person name="Chang C.-S."/>
            <person name="Bishop D.K."/>
            <person name="Hsueh Y.-P."/>
            <person name="Wang T.-F."/>
        </authorList>
    </citation>
    <scope>PROTEIN SEQUENCE OF 2-6</scope>
    <scope>FUNCTION</scope>
    <scope>INTERACTION WITH MND1</scope>
    <scope>DNA-BINDING</scope>
</reference>
<reference key="5">
    <citation type="journal article" date="2002" name="Mol. Cell. Biol.">
        <title>The Mnd1 protein forms a complex with Hop2 to promote homologous chromosome pairing and meiotic double-strand break repair.</title>
        <authorList>
            <person name="Tsubouchi H."/>
            <person name="Roeder G.S."/>
        </authorList>
    </citation>
    <scope>FUNCTION</scope>
    <scope>INTERACTION WITH MND1</scope>
</reference>
<reference key="6">
    <citation type="journal article" date="2014" name="J. Biol. Chem.">
        <title>The third exon of the budding yeast meiotic recombination gene HOP2 is required for calcium-dependent and recombinase Dmc1-specific stimulation of homologous strand assimilation.</title>
        <authorList>
            <person name="Chan Y.L."/>
            <person name="Brown M.S."/>
            <person name="Qin D."/>
            <person name="Handa N."/>
            <person name="Bishop D.K."/>
        </authorList>
    </citation>
    <scope>REVISION OF GENE MODEL</scope>
</reference>